<organism>
    <name type="scientific">Mycoplasmopsis synoviae (strain 53)</name>
    <name type="common">Mycoplasma synoviae</name>
    <dbReference type="NCBI Taxonomy" id="262723"/>
    <lineage>
        <taxon>Bacteria</taxon>
        <taxon>Bacillati</taxon>
        <taxon>Mycoplasmatota</taxon>
        <taxon>Mycoplasmoidales</taxon>
        <taxon>Metamycoplasmataceae</taxon>
        <taxon>Mycoplasmopsis</taxon>
    </lineage>
</organism>
<name>SYE_MYCS5</name>
<protein>
    <recommendedName>
        <fullName evidence="1">Glutamate--tRNA ligase</fullName>
        <ecNumber evidence="1">6.1.1.17</ecNumber>
    </recommendedName>
    <alternativeName>
        <fullName evidence="1">Glutamyl-tRNA synthetase</fullName>
        <shortName evidence="1">GluRS</shortName>
    </alternativeName>
</protein>
<sequence>MNKIRTRYAPSPTGFLHIGGARTALFCYLFAKHFNGDFIFRLEDTDVKRNVEGGEASQLENLAWLGIIPDESPLKPNLKYGKYRQSEKLDRYKEVLDMLLEKNLAYKAYDLPEELEAQKLESEQKGFASFRYDPSWLKISDEEKAKRDLNNQFSYRIRMPKDKVFSWNDLVRGEISFSSNEISDWVIFKSDNYPTYNFAVVVDDHDMQISHVLRGEEHIGNTPKQLALYDYLNWSSPQYGHLTIITDMGGKKLSKRDLSLKQFIEDYKNEGYIPHAIFNFLALLGWTSEDAKEVMSKKELISKFNPARLSKSPSKFDVNKMSWFSKIYMKNQSNEEVQSHLDFKDFNSNSSWKEIFTSTFKESATTYLELQKALNNYLNPMSSELVLNEEELKVVKEFKANLKSFTVEEIQAAINLTASNLKLKGKALFMPIRKACTYLEHGPELAKAIYLFGEKLITERLAKYEN</sequence>
<reference key="1">
    <citation type="journal article" date="2005" name="J. Bacteriol.">
        <title>Swine and poultry pathogens: the complete genome sequences of two strains of Mycoplasma hyopneumoniae and a strain of Mycoplasma synoviae.</title>
        <authorList>
            <person name="Vasconcelos A.T.R."/>
            <person name="Ferreira H.B."/>
            <person name="Bizarro C.V."/>
            <person name="Bonatto S.L."/>
            <person name="Carvalho M.O."/>
            <person name="Pinto P.M."/>
            <person name="Almeida D.F."/>
            <person name="Almeida L.G.P."/>
            <person name="Almeida R."/>
            <person name="Alves-Junior L."/>
            <person name="Assuncao E.N."/>
            <person name="Azevedo V.A.C."/>
            <person name="Bogo M.R."/>
            <person name="Brigido M.M."/>
            <person name="Brocchi M."/>
            <person name="Burity H.A."/>
            <person name="Camargo A.A."/>
            <person name="Camargo S.S."/>
            <person name="Carepo M.S."/>
            <person name="Carraro D.M."/>
            <person name="de Mattos Cascardo J.C."/>
            <person name="Castro L.A."/>
            <person name="Cavalcanti G."/>
            <person name="Chemale G."/>
            <person name="Collevatti R.G."/>
            <person name="Cunha C.W."/>
            <person name="Dallagiovanna B."/>
            <person name="Dambros B.P."/>
            <person name="Dellagostin O.A."/>
            <person name="Falcao C."/>
            <person name="Fantinatti-Garboggini F."/>
            <person name="Felipe M.S.S."/>
            <person name="Fiorentin L."/>
            <person name="Franco G.R."/>
            <person name="Freitas N.S.A."/>
            <person name="Frias D."/>
            <person name="Grangeiro T.B."/>
            <person name="Grisard E.C."/>
            <person name="Guimaraes C.T."/>
            <person name="Hungria M."/>
            <person name="Jardim S.N."/>
            <person name="Krieger M.A."/>
            <person name="Laurino J.P."/>
            <person name="Lima L.F.A."/>
            <person name="Lopes M.I."/>
            <person name="Loreto E.L.S."/>
            <person name="Madeira H.M.F."/>
            <person name="Manfio G.P."/>
            <person name="Maranhao A.Q."/>
            <person name="Martinkovics C.T."/>
            <person name="Medeiros S.R.B."/>
            <person name="Moreira M.A.M."/>
            <person name="Neiva M."/>
            <person name="Ramalho-Neto C.E."/>
            <person name="Nicolas M.F."/>
            <person name="Oliveira S.C."/>
            <person name="Paixao R.F.C."/>
            <person name="Pedrosa F.O."/>
            <person name="Pena S.D.J."/>
            <person name="Pereira M."/>
            <person name="Pereira-Ferrari L."/>
            <person name="Piffer I."/>
            <person name="Pinto L.S."/>
            <person name="Potrich D.P."/>
            <person name="Salim A.C.M."/>
            <person name="Santos F.R."/>
            <person name="Schmitt R."/>
            <person name="Schneider M.P.C."/>
            <person name="Schrank A."/>
            <person name="Schrank I.S."/>
            <person name="Schuck A.F."/>
            <person name="Seuanez H.N."/>
            <person name="Silva D.W."/>
            <person name="Silva R."/>
            <person name="Silva S.C."/>
            <person name="Soares C.M.A."/>
            <person name="Souza K.R.L."/>
            <person name="Souza R.C."/>
            <person name="Staats C.C."/>
            <person name="Steffens M.B.R."/>
            <person name="Teixeira S.M.R."/>
            <person name="Urmenyi T.P."/>
            <person name="Vainstein M.H."/>
            <person name="Zuccherato L.W."/>
            <person name="Simpson A.J.G."/>
            <person name="Zaha A."/>
        </authorList>
    </citation>
    <scope>NUCLEOTIDE SEQUENCE [LARGE SCALE GENOMIC DNA]</scope>
    <source>
        <strain>53</strain>
    </source>
</reference>
<gene>
    <name evidence="1" type="primary">gltX</name>
    <name type="ordered locus">MS53_0100</name>
</gene>
<keyword id="KW-0030">Aminoacyl-tRNA synthetase</keyword>
<keyword id="KW-0067">ATP-binding</keyword>
<keyword id="KW-0963">Cytoplasm</keyword>
<keyword id="KW-0436">Ligase</keyword>
<keyword id="KW-0547">Nucleotide-binding</keyword>
<keyword id="KW-0648">Protein biosynthesis</keyword>
<keyword id="KW-1185">Reference proteome</keyword>
<dbReference type="EC" id="6.1.1.17" evidence="1"/>
<dbReference type="EMBL" id="AE017245">
    <property type="protein sequence ID" value="AAZ43521.1"/>
    <property type="molecule type" value="Genomic_DNA"/>
</dbReference>
<dbReference type="RefSeq" id="WP_011283264.1">
    <property type="nucleotide sequence ID" value="NC_007294.1"/>
</dbReference>
<dbReference type="SMR" id="Q4A6V0"/>
<dbReference type="STRING" id="262723.MS53_0100"/>
<dbReference type="KEGG" id="msy:MS53_0100"/>
<dbReference type="eggNOG" id="COG0008">
    <property type="taxonomic scope" value="Bacteria"/>
</dbReference>
<dbReference type="HOGENOM" id="CLU_015768_6_1_14"/>
<dbReference type="OrthoDB" id="9807503at2"/>
<dbReference type="Proteomes" id="UP000000549">
    <property type="component" value="Chromosome"/>
</dbReference>
<dbReference type="GO" id="GO:0005829">
    <property type="term" value="C:cytosol"/>
    <property type="evidence" value="ECO:0007669"/>
    <property type="project" value="TreeGrafter"/>
</dbReference>
<dbReference type="GO" id="GO:0005524">
    <property type="term" value="F:ATP binding"/>
    <property type="evidence" value="ECO:0007669"/>
    <property type="project" value="UniProtKB-UniRule"/>
</dbReference>
<dbReference type="GO" id="GO:0004818">
    <property type="term" value="F:glutamate-tRNA ligase activity"/>
    <property type="evidence" value="ECO:0007669"/>
    <property type="project" value="UniProtKB-UniRule"/>
</dbReference>
<dbReference type="GO" id="GO:0000049">
    <property type="term" value="F:tRNA binding"/>
    <property type="evidence" value="ECO:0007669"/>
    <property type="project" value="InterPro"/>
</dbReference>
<dbReference type="GO" id="GO:0008270">
    <property type="term" value="F:zinc ion binding"/>
    <property type="evidence" value="ECO:0007669"/>
    <property type="project" value="InterPro"/>
</dbReference>
<dbReference type="GO" id="GO:0006424">
    <property type="term" value="P:glutamyl-tRNA aminoacylation"/>
    <property type="evidence" value="ECO:0007669"/>
    <property type="project" value="UniProtKB-UniRule"/>
</dbReference>
<dbReference type="CDD" id="cd00808">
    <property type="entry name" value="GluRS_core"/>
    <property type="match status" value="1"/>
</dbReference>
<dbReference type="FunFam" id="3.40.50.620:FF:000007">
    <property type="entry name" value="Glutamate--tRNA ligase"/>
    <property type="match status" value="1"/>
</dbReference>
<dbReference type="Gene3D" id="1.10.10.350">
    <property type="match status" value="1"/>
</dbReference>
<dbReference type="Gene3D" id="3.40.50.620">
    <property type="entry name" value="HUPs"/>
    <property type="match status" value="1"/>
</dbReference>
<dbReference type="HAMAP" id="MF_00022">
    <property type="entry name" value="Glu_tRNA_synth_type1"/>
    <property type="match status" value="1"/>
</dbReference>
<dbReference type="InterPro" id="IPR045462">
    <property type="entry name" value="aa-tRNA-synth_I_cd-bd"/>
</dbReference>
<dbReference type="InterPro" id="IPR020751">
    <property type="entry name" value="aa-tRNA-synth_I_codon-bd_sub2"/>
</dbReference>
<dbReference type="InterPro" id="IPR001412">
    <property type="entry name" value="aa-tRNA-synth_I_CS"/>
</dbReference>
<dbReference type="InterPro" id="IPR008925">
    <property type="entry name" value="aa_tRNA-synth_I_cd-bd_sf"/>
</dbReference>
<dbReference type="InterPro" id="IPR004527">
    <property type="entry name" value="Glu-tRNA-ligase_bac/mito"/>
</dbReference>
<dbReference type="InterPro" id="IPR000924">
    <property type="entry name" value="Glu/Gln-tRNA-synth"/>
</dbReference>
<dbReference type="InterPro" id="IPR020058">
    <property type="entry name" value="Glu/Gln-tRNA-synth_Ib_cat-dom"/>
</dbReference>
<dbReference type="InterPro" id="IPR049940">
    <property type="entry name" value="GluQ/Sye"/>
</dbReference>
<dbReference type="InterPro" id="IPR033910">
    <property type="entry name" value="GluRS_core"/>
</dbReference>
<dbReference type="InterPro" id="IPR014729">
    <property type="entry name" value="Rossmann-like_a/b/a_fold"/>
</dbReference>
<dbReference type="NCBIfam" id="TIGR00464">
    <property type="entry name" value="gltX_bact"/>
    <property type="match status" value="1"/>
</dbReference>
<dbReference type="PANTHER" id="PTHR43311">
    <property type="entry name" value="GLUTAMATE--TRNA LIGASE"/>
    <property type="match status" value="1"/>
</dbReference>
<dbReference type="PANTHER" id="PTHR43311:SF2">
    <property type="entry name" value="GLUTAMATE--TRNA LIGASE, MITOCHONDRIAL-RELATED"/>
    <property type="match status" value="1"/>
</dbReference>
<dbReference type="Pfam" id="PF19269">
    <property type="entry name" value="Anticodon_2"/>
    <property type="match status" value="1"/>
</dbReference>
<dbReference type="Pfam" id="PF00749">
    <property type="entry name" value="tRNA-synt_1c"/>
    <property type="match status" value="1"/>
</dbReference>
<dbReference type="PRINTS" id="PR00987">
    <property type="entry name" value="TRNASYNTHGLU"/>
</dbReference>
<dbReference type="SUPFAM" id="SSF48163">
    <property type="entry name" value="An anticodon-binding domain of class I aminoacyl-tRNA synthetases"/>
    <property type="match status" value="1"/>
</dbReference>
<dbReference type="SUPFAM" id="SSF52374">
    <property type="entry name" value="Nucleotidylyl transferase"/>
    <property type="match status" value="1"/>
</dbReference>
<dbReference type="PROSITE" id="PS00178">
    <property type="entry name" value="AA_TRNA_LIGASE_I"/>
    <property type="match status" value="1"/>
</dbReference>
<comment type="function">
    <text evidence="1">Catalyzes the attachment of glutamate to tRNA(Glu) in a two-step reaction: glutamate is first activated by ATP to form Glu-AMP and then transferred to the acceptor end of tRNA(Glu).</text>
</comment>
<comment type="catalytic activity">
    <reaction evidence="1">
        <text>tRNA(Glu) + L-glutamate + ATP = L-glutamyl-tRNA(Glu) + AMP + diphosphate</text>
        <dbReference type="Rhea" id="RHEA:23540"/>
        <dbReference type="Rhea" id="RHEA-COMP:9663"/>
        <dbReference type="Rhea" id="RHEA-COMP:9680"/>
        <dbReference type="ChEBI" id="CHEBI:29985"/>
        <dbReference type="ChEBI" id="CHEBI:30616"/>
        <dbReference type="ChEBI" id="CHEBI:33019"/>
        <dbReference type="ChEBI" id="CHEBI:78442"/>
        <dbReference type="ChEBI" id="CHEBI:78520"/>
        <dbReference type="ChEBI" id="CHEBI:456215"/>
        <dbReference type="EC" id="6.1.1.17"/>
    </reaction>
</comment>
<comment type="subunit">
    <text evidence="1">Monomer.</text>
</comment>
<comment type="subcellular location">
    <subcellularLocation>
        <location evidence="1">Cytoplasm</location>
    </subcellularLocation>
</comment>
<comment type="similarity">
    <text evidence="1">Belongs to the class-I aminoacyl-tRNA synthetase family. Glutamate--tRNA ligase type 1 subfamily.</text>
</comment>
<feature type="chain" id="PRO_0000237374" description="Glutamate--tRNA ligase">
    <location>
        <begin position="1"/>
        <end position="466"/>
    </location>
</feature>
<feature type="short sequence motif" description="'HIGH' region" evidence="1">
    <location>
        <begin position="10"/>
        <end position="20"/>
    </location>
</feature>
<feature type="short sequence motif" description="'KMSKS' region" evidence="1">
    <location>
        <begin position="252"/>
        <end position="256"/>
    </location>
</feature>
<feature type="binding site" evidence="1">
    <location>
        <position position="255"/>
    </location>
    <ligand>
        <name>ATP</name>
        <dbReference type="ChEBI" id="CHEBI:30616"/>
    </ligand>
</feature>
<accession>Q4A6V0</accession>
<evidence type="ECO:0000255" key="1">
    <source>
        <dbReference type="HAMAP-Rule" id="MF_00022"/>
    </source>
</evidence>
<proteinExistence type="inferred from homology"/>